<protein>
    <recommendedName>
        <fullName>Soluble interferon alpha/beta receptor OPG204</fullName>
        <shortName>S antigen</shortName>
    </recommendedName>
</protein>
<proteinExistence type="evidence at transcript level"/>
<organismHost>
    <name type="scientific">Homo sapiens</name>
    <name type="common">Human</name>
    <dbReference type="NCBI Taxonomy" id="9606"/>
</organismHost>
<dbReference type="EMBL" id="X67117">
    <property type="protein sequence ID" value="CAA47529.1"/>
    <property type="molecule type" value="Genomic_DNA"/>
</dbReference>
<dbReference type="EMBL" id="X69198">
    <property type="protein sequence ID" value="CAA49129.1"/>
    <property type="molecule type" value="Genomic_DNA"/>
</dbReference>
<dbReference type="PIR" id="S46877">
    <property type="entry name" value="S46877"/>
</dbReference>
<dbReference type="RefSeq" id="NP_042232.1">
    <property type="nucleotide sequence ID" value="NC_001611.1"/>
</dbReference>
<dbReference type="SMR" id="P0DST1"/>
<dbReference type="GeneID" id="1486551"/>
<dbReference type="KEGG" id="vg:1486551"/>
<dbReference type="Proteomes" id="UP000002060">
    <property type="component" value="Segment"/>
</dbReference>
<dbReference type="GO" id="GO:0005576">
    <property type="term" value="C:extracellular region"/>
    <property type="evidence" value="ECO:0007669"/>
    <property type="project" value="UniProtKB-SubCell"/>
</dbReference>
<dbReference type="GO" id="GO:0052170">
    <property type="term" value="P:symbiont-mediated suppression of host innate immune response"/>
    <property type="evidence" value="ECO:0007669"/>
    <property type="project" value="UniProtKB-KW"/>
</dbReference>
<dbReference type="GO" id="GO:0039502">
    <property type="term" value="P:symbiont-mediated suppression of host type I interferon-mediated signaling pathway"/>
    <property type="evidence" value="ECO:0007669"/>
    <property type="project" value="UniProtKB-KW"/>
</dbReference>
<dbReference type="CDD" id="cd00096">
    <property type="entry name" value="Ig"/>
    <property type="match status" value="1"/>
</dbReference>
<dbReference type="Gene3D" id="2.60.40.10">
    <property type="entry name" value="Immunoglobulins"/>
    <property type="match status" value="3"/>
</dbReference>
<dbReference type="InterPro" id="IPR007110">
    <property type="entry name" value="Ig-like_dom"/>
</dbReference>
<dbReference type="InterPro" id="IPR036179">
    <property type="entry name" value="Ig-like_dom_sf"/>
</dbReference>
<dbReference type="InterPro" id="IPR013783">
    <property type="entry name" value="Ig-like_fold"/>
</dbReference>
<dbReference type="InterPro" id="IPR003599">
    <property type="entry name" value="Ig_sub"/>
</dbReference>
<dbReference type="InterPro" id="IPR015621">
    <property type="entry name" value="IL-1_rcpt_fam"/>
</dbReference>
<dbReference type="PANTHER" id="PTHR11890">
    <property type="entry name" value="INTERLEUKIN-1 RECEPTOR FAMILY MEMBER"/>
    <property type="match status" value="1"/>
</dbReference>
<dbReference type="PANTHER" id="PTHR11890:SF44">
    <property type="entry name" value="X-LINKED INTERLEUKIN-1 RECEPTOR ACCESSORY PROTEIN-LIKE 2"/>
    <property type="match status" value="1"/>
</dbReference>
<dbReference type="Pfam" id="PF13895">
    <property type="entry name" value="Ig_2"/>
    <property type="match status" value="1"/>
</dbReference>
<dbReference type="SMART" id="SM00409">
    <property type="entry name" value="IG"/>
    <property type="match status" value="3"/>
</dbReference>
<dbReference type="SUPFAM" id="SSF48726">
    <property type="entry name" value="Immunoglobulin"/>
    <property type="match status" value="2"/>
</dbReference>
<dbReference type="PROSITE" id="PS50835">
    <property type="entry name" value="IG_LIKE"/>
    <property type="match status" value="2"/>
</dbReference>
<organism>
    <name type="scientific">Variola virus (isolate Human/India/Ind3/1967)</name>
    <name type="common">VARV</name>
    <name type="synonym">Smallpox virus</name>
    <dbReference type="NCBI Taxonomy" id="587200"/>
    <lineage>
        <taxon>Viruses</taxon>
        <taxon>Varidnaviria</taxon>
        <taxon>Bamfordvirae</taxon>
        <taxon>Nucleocytoviricota</taxon>
        <taxon>Pokkesviricetes</taxon>
        <taxon>Chitovirales</taxon>
        <taxon>Poxviridae</taxon>
        <taxon>Chordopoxvirinae</taxon>
        <taxon>Orthopoxvirus</taxon>
        <taxon>Variola virus</taxon>
    </lineage>
</organism>
<reference key="1">
    <citation type="journal article" date="1993" name="FEBS Lett.">
        <title>Genes of variola and vaccinia viruses necessary to overcome the host protective mechanisms.</title>
        <authorList>
            <person name="Shchelkunov S.N."/>
            <person name="Blinov V.M."/>
            <person name="Sandakhchiev L.S."/>
        </authorList>
    </citation>
    <scope>NUCLEOTIDE SEQUENCE [GENOMIC DNA]</scope>
</reference>
<name>PG204_VAR67</name>
<sequence>MMKMTMKMMVHIYFVSLLLLLFHSYAIDIENEITDFFNKMKDTLPAKDSKWLNPTCIFGGTMNNMAAIGEPFSAKCPPIEDSLLSRRYINKDNVVNWEKIGKTRRPLNRRVKNGDLWIANYTSNDSHRMYLCTVITKNGDCIQGIVRSHVRKPSSCIPEIYELGTHDKYGIDLYCGIIYAKHYNNITWYKDNKEINIDDIKYSQTGKELIIHNPALEDSGRYDCYVHYDDVRIKNDIVVSRCKILTVIPSQDHRFKLILDSKINVIIGEPANITCTAVSTSLLFDDVLIEWENPSGWLIGFDFDVYSVLTSRGGITEATLYFKNVTEEYIGNTYKCRGHNYYFEKTLTTTVVLE</sequence>
<accession>P0DST1</accession>
<accession>P33795</accession>
<gene>
    <name type="primary">OPG204</name>
    <name type="ORF">B19R</name>
    <name type="ORF">B20R</name>
</gene>
<keyword id="KW-1015">Disulfide bond</keyword>
<keyword id="KW-0244">Early protein</keyword>
<keyword id="KW-0325">Glycoprotein</keyword>
<keyword id="KW-0945">Host-virus interaction</keyword>
<keyword id="KW-0393">Immunoglobulin domain</keyword>
<keyword id="KW-1090">Inhibition of host innate immune response by virus</keyword>
<keyword id="KW-1114">Inhibition of host interferon signaling pathway by virus</keyword>
<keyword id="KW-0922">Interferon antiviral system evasion</keyword>
<keyword id="KW-1185">Reference proteome</keyword>
<keyword id="KW-0677">Repeat</keyword>
<keyword id="KW-0964">Secreted</keyword>
<keyword id="KW-0732">Signal</keyword>
<keyword id="KW-0899">Viral immunoevasion</keyword>
<feature type="signal peptide" evidence="2">
    <location>
        <begin position="1"/>
        <end position="22"/>
    </location>
</feature>
<feature type="chain" id="PRO_0000015468" description="Soluble interferon alpha/beta receptor OPG204">
    <location>
        <begin position="23"/>
        <end position="354"/>
    </location>
</feature>
<feature type="domain" description="Ig-like C2-type 1">
    <location>
        <begin position="68"/>
        <end position="150"/>
    </location>
</feature>
<feature type="domain" description="Ig-like C2-type 2">
    <location>
        <begin position="158"/>
        <end position="240"/>
    </location>
</feature>
<feature type="domain" description="Ig-like V-type">
    <location>
        <begin position="249"/>
        <end position="348"/>
    </location>
</feature>
<feature type="glycosylation site" description="N-linked (GlcNAc...) asparagine; by host" evidence="2">
    <location>
        <position position="120"/>
    </location>
</feature>
<feature type="glycosylation site" description="N-linked (GlcNAc...) asparagine; by host" evidence="2">
    <location>
        <position position="124"/>
    </location>
</feature>
<feature type="glycosylation site" description="N-linked (GlcNAc...) asparagine; by host" evidence="2">
    <location>
        <position position="185"/>
    </location>
</feature>
<feature type="glycosylation site" description="N-linked (GlcNAc...) asparagine; by host" evidence="2">
    <location>
        <position position="272"/>
    </location>
</feature>
<feature type="glycosylation site" description="N-linked (GlcNAc...) asparagine; by host" evidence="2">
    <location>
        <position position="324"/>
    </location>
</feature>
<feature type="disulfide bond" evidence="3">
    <location>
        <begin position="76"/>
        <end position="132"/>
    </location>
</feature>
<feature type="disulfide bond" evidence="3">
    <location>
        <begin position="175"/>
        <end position="224"/>
    </location>
</feature>
<feature type="disulfide bond" evidence="3">
    <location>
        <begin position="275"/>
        <end position="336"/>
    </location>
</feature>
<evidence type="ECO:0000250" key="1">
    <source>
        <dbReference type="UniProtKB" id="P25213"/>
    </source>
</evidence>
<evidence type="ECO:0000255" key="2"/>
<evidence type="ECO:0000255" key="3">
    <source>
        <dbReference type="PROSITE-ProRule" id="PRU00114"/>
    </source>
</evidence>
<evidence type="ECO:0000305" key="4"/>
<comment type="function">
    <text evidence="1">Counteracts the antiviral effects of host IFN-alpha/beta and key IFN-inducible proteins involved in viral RNA degradation suxh as host OAS1. Acts as a soluble IFN-alpha receptor and thus inhibits the interaction between host IFN-alpha and its receptor.</text>
</comment>
<comment type="subunit">
    <text evidence="1">Interacts with host IFNA1.</text>
</comment>
<comment type="subcellular location">
    <subcellularLocation>
        <location evidence="1">Secreted</location>
    </subcellularLocation>
    <text evidence="1">Found associated with both uninfected and infected host cell membranes after secretion.</text>
</comment>
<comment type="induction">
    <text>Expressed in the early phase of the viral replicative cycle.</text>
</comment>
<comment type="similarity">
    <text evidence="4">Belongs to the interleukin-1 receptor family.</text>
</comment>